<dbReference type="EC" id="2.1.1.319"/>
<dbReference type="EMBL" id="AC004809">
    <property type="protein sequence ID" value="AAF40450.1"/>
    <property type="molecule type" value="Genomic_DNA"/>
</dbReference>
<dbReference type="EMBL" id="CP002684">
    <property type="protein sequence ID" value="AEE27753.1"/>
    <property type="molecule type" value="Genomic_DNA"/>
</dbReference>
<dbReference type="EMBL" id="CP002684">
    <property type="protein sequence ID" value="AEE27754.1"/>
    <property type="molecule type" value="Genomic_DNA"/>
</dbReference>
<dbReference type="EMBL" id="AF436837">
    <property type="protein sequence ID" value="AAL32019.1"/>
    <property type="molecule type" value="mRNA"/>
</dbReference>
<dbReference type="EMBL" id="AY058846">
    <property type="protein sequence ID" value="AAL24234.1"/>
    <property type="molecule type" value="mRNA"/>
</dbReference>
<dbReference type="EMBL" id="AY132011">
    <property type="protein sequence ID" value="AAM91044.1"/>
    <property type="molecule type" value="mRNA"/>
</dbReference>
<dbReference type="PIR" id="A86182">
    <property type="entry name" value="A86182"/>
</dbReference>
<dbReference type="RefSeq" id="NP_563720.1">
    <molecule id="Q9MAT5-1"/>
    <property type="nucleotide sequence ID" value="NM_100365.4"/>
</dbReference>
<dbReference type="RefSeq" id="NP_849591.1">
    <molecule id="Q9MAT5-2"/>
    <property type="nucleotide sequence ID" value="NM_179260.1"/>
</dbReference>
<dbReference type="PDB" id="3R0Q">
    <property type="method" value="X-ray"/>
    <property type="resolution" value="2.61 A"/>
    <property type="chains" value="A/C/E/G=11-383"/>
</dbReference>
<dbReference type="PDBsum" id="3R0Q"/>
<dbReference type="SMR" id="Q9MAT5"/>
<dbReference type="BioGRID" id="24628">
    <property type="interactions" value="4"/>
</dbReference>
<dbReference type="FunCoup" id="Q9MAT5">
    <property type="interactions" value="632"/>
</dbReference>
<dbReference type="IntAct" id="Q9MAT5">
    <property type="interactions" value="4"/>
</dbReference>
<dbReference type="MINT" id="Q9MAT5"/>
<dbReference type="STRING" id="3702.Q9MAT5"/>
<dbReference type="iPTMnet" id="Q9MAT5"/>
<dbReference type="MetOSite" id="Q9MAT5"/>
<dbReference type="PaxDb" id="3702-AT1G04870.2"/>
<dbReference type="ProteomicsDB" id="244430">
    <molecule id="Q9MAT5-1"/>
</dbReference>
<dbReference type="EnsemblPlants" id="AT1G04870.1">
    <molecule id="Q9MAT5-2"/>
    <property type="protein sequence ID" value="AT1G04870.1"/>
    <property type="gene ID" value="AT1G04870"/>
</dbReference>
<dbReference type="EnsemblPlants" id="AT1G04870.2">
    <molecule id="Q9MAT5-1"/>
    <property type="protein sequence ID" value="AT1G04870.2"/>
    <property type="gene ID" value="AT1G04870"/>
</dbReference>
<dbReference type="GeneID" id="839393"/>
<dbReference type="Gramene" id="AT1G04870.1">
    <molecule id="Q9MAT5-2"/>
    <property type="protein sequence ID" value="AT1G04870.1"/>
    <property type="gene ID" value="AT1G04870"/>
</dbReference>
<dbReference type="Gramene" id="AT1G04870.2">
    <molecule id="Q9MAT5-1"/>
    <property type="protein sequence ID" value="AT1G04870.2"/>
    <property type="gene ID" value="AT1G04870"/>
</dbReference>
<dbReference type="KEGG" id="ath:AT1G04870"/>
<dbReference type="Araport" id="AT1G04870"/>
<dbReference type="TAIR" id="AT1G04870">
    <property type="gene designation" value="PRMT10"/>
</dbReference>
<dbReference type="eggNOG" id="KOG1499">
    <property type="taxonomic scope" value="Eukaryota"/>
</dbReference>
<dbReference type="HOGENOM" id="CLU_017375_1_2_1"/>
<dbReference type="InParanoid" id="Q9MAT5"/>
<dbReference type="OMA" id="NSEPTHW"/>
<dbReference type="PhylomeDB" id="Q9MAT5"/>
<dbReference type="BRENDA" id="2.1.1.319">
    <property type="organism ID" value="399"/>
</dbReference>
<dbReference type="CD-CODE" id="4299E36E">
    <property type="entry name" value="Nucleolus"/>
</dbReference>
<dbReference type="EvolutionaryTrace" id="Q9MAT5"/>
<dbReference type="PRO" id="PR:Q9MAT5"/>
<dbReference type="Proteomes" id="UP000006548">
    <property type="component" value="Chromosome 1"/>
</dbReference>
<dbReference type="ExpressionAtlas" id="Q9MAT5">
    <property type="expression patterns" value="baseline and differential"/>
</dbReference>
<dbReference type="GO" id="GO:0008469">
    <property type="term" value="F:histone arginine N-methyltransferase activity"/>
    <property type="evidence" value="ECO:0000314"/>
    <property type="project" value="TAIR"/>
</dbReference>
<dbReference type="GO" id="GO:0035242">
    <property type="term" value="F:protein-arginine omega-N asymmetric methyltransferase activity"/>
    <property type="evidence" value="ECO:0000314"/>
    <property type="project" value="TAIR"/>
</dbReference>
<dbReference type="GO" id="GO:0035241">
    <property type="term" value="F:protein-arginine omega-N monomethyltransferase activity"/>
    <property type="evidence" value="ECO:0000314"/>
    <property type="project" value="TAIR"/>
</dbReference>
<dbReference type="GO" id="GO:0019919">
    <property type="term" value="P:peptidyl-arginine methylation, to asymmetrical-dimethyl arginine"/>
    <property type="evidence" value="ECO:0000314"/>
    <property type="project" value="TAIR"/>
</dbReference>
<dbReference type="GO" id="GO:0010228">
    <property type="term" value="P:vegetative to reproductive phase transition of meristem"/>
    <property type="evidence" value="ECO:0000315"/>
    <property type="project" value="TAIR"/>
</dbReference>
<dbReference type="CDD" id="cd02440">
    <property type="entry name" value="AdoMet_MTases"/>
    <property type="match status" value="1"/>
</dbReference>
<dbReference type="FunFam" id="2.70.160.11:FF:000012">
    <property type="entry name" value="Protein arginine N-methyltransferase PRMT10"/>
    <property type="match status" value="1"/>
</dbReference>
<dbReference type="FunFam" id="3.40.50.150:FF:000132">
    <property type="entry name" value="Protein arginine N-methyltransferase PRMT10"/>
    <property type="match status" value="1"/>
</dbReference>
<dbReference type="Gene3D" id="2.70.160.11">
    <property type="entry name" value="Hnrnp arginine n-methyltransferase1"/>
    <property type="match status" value="1"/>
</dbReference>
<dbReference type="Gene3D" id="3.40.50.150">
    <property type="entry name" value="Vaccinia Virus protein VP39"/>
    <property type="match status" value="1"/>
</dbReference>
<dbReference type="InterPro" id="IPR025799">
    <property type="entry name" value="Arg_MeTrfase"/>
</dbReference>
<dbReference type="InterPro" id="IPR055135">
    <property type="entry name" value="PRMT_dom"/>
</dbReference>
<dbReference type="InterPro" id="IPR029063">
    <property type="entry name" value="SAM-dependent_MTases_sf"/>
</dbReference>
<dbReference type="PANTHER" id="PTHR11006">
    <property type="entry name" value="PROTEIN ARGININE N-METHYLTRANSFERASE"/>
    <property type="match status" value="1"/>
</dbReference>
<dbReference type="PANTHER" id="PTHR11006:SF68">
    <property type="entry name" value="PROTEIN ARGININE N-METHYLTRANSFERASE PRMT10"/>
    <property type="match status" value="1"/>
</dbReference>
<dbReference type="Pfam" id="PF06325">
    <property type="entry name" value="PrmA"/>
    <property type="match status" value="1"/>
</dbReference>
<dbReference type="Pfam" id="PF22528">
    <property type="entry name" value="PRMT_C"/>
    <property type="match status" value="1"/>
</dbReference>
<dbReference type="SUPFAM" id="SSF53335">
    <property type="entry name" value="S-adenosyl-L-methionine-dependent methyltransferases"/>
    <property type="match status" value="1"/>
</dbReference>
<dbReference type="PROSITE" id="PS51678">
    <property type="entry name" value="SAM_MT_PRMT"/>
    <property type="match status" value="1"/>
</dbReference>
<evidence type="ECO:0000250" key="1"/>
<evidence type="ECO:0000255" key="2">
    <source>
        <dbReference type="PROSITE-ProRule" id="PRU01015"/>
    </source>
</evidence>
<evidence type="ECO:0000256" key="3">
    <source>
        <dbReference type="SAM" id="MobiDB-lite"/>
    </source>
</evidence>
<evidence type="ECO:0000269" key="4">
    <source>
    </source>
</evidence>
<evidence type="ECO:0000303" key="5">
    <source>
    </source>
</evidence>
<evidence type="ECO:0000305" key="6"/>
<evidence type="ECO:0007829" key="7">
    <source>
        <dbReference type="PDB" id="3R0Q"/>
    </source>
</evidence>
<reference key="1">
    <citation type="journal article" date="2000" name="Nature">
        <title>Sequence and analysis of chromosome 1 of the plant Arabidopsis thaliana.</title>
        <authorList>
            <person name="Theologis A."/>
            <person name="Ecker J.R."/>
            <person name="Palm C.J."/>
            <person name="Federspiel N.A."/>
            <person name="Kaul S."/>
            <person name="White O."/>
            <person name="Alonso J."/>
            <person name="Altafi H."/>
            <person name="Araujo R."/>
            <person name="Bowman C.L."/>
            <person name="Brooks S.Y."/>
            <person name="Buehler E."/>
            <person name="Chan A."/>
            <person name="Chao Q."/>
            <person name="Chen H."/>
            <person name="Cheuk R.F."/>
            <person name="Chin C.W."/>
            <person name="Chung M.K."/>
            <person name="Conn L."/>
            <person name="Conway A.B."/>
            <person name="Conway A.R."/>
            <person name="Creasy T.H."/>
            <person name="Dewar K."/>
            <person name="Dunn P."/>
            <person name="Etgu P."/>
            <person name="Feldblyum T.V."/>
            <person name="Feng J.-D."/>
            <person name="Fong B."/>
            <person name="Fujii C.Y."/>
            <person name="Gill J.E."/>
            <person name="Goldsmith A.D."/>
            <person name="Haas B."/>
            <person name="Hansen N.F."/>
            <person name="Hughes B."/>
            <person name="Huizar L."/>
            <person name="Hunter J.L."/>
            <person name="Jenkins J."/>
            <person name="Johnson-Hopson C."/>
            <person name="Khan S."/>
            <person name="Khaykin E."/>
            <person name="Kim C.J."/>
            <person name="Koo H.L."/>
            <person name="Kremenetskaia I."/>
            <person name="Kurtz D.B."/>
            <person name="Kwan A."/>
            <person name="Lam B."/>
            <person name="Langin-Hooper S."/>
            <person name="Lee A."/>
            <person name="Lee J.M."/>
            <person name="Lenz C.A."/>
            <person name="Li J.H."/>
            <person name="Li Y.-P."/>
            <person name="Lin X."/>
            <person name="Liu S.X."/>
            <person name="Liu Z.A."/>
            <person name="Luros J.S."/>
            <person name="Maiti R."/>
            <person name="Marziali A."/>
            <person name="Militscher J."/>
            <person name="Miranda M."/>
            <person name="Nguyen M."/>
            <person name="Nierman W.C."/>
            <person name="Osborne B.I."/>
            <person name="Pai G."/>
            <person name="Peterson J."/>
            <person name="Pham P.K."/>
            <person name="Rizzo M."/>
            <person name="Rooney T."/>
            <person name="Rowley D."/>
            <person name="Sakano H."/>
            <person name="Salzberg S.L."/>
            <person name="Schwartz J.R."/>
            <person name="Shinn P."/>
            <person name="Southwick A.M."/>
            <person name="Sun H."/>
            <person name="Tallon L.J."/>
            <person name="Tambunga G."/>
            <person name="Toriumi M.J."/>
            <person name="Town C.D."/>
            <person name="Utterback T."/>
            <person name="Van Aken S."/>
            <person name="Vaysberg M."/>
            <person name="Vysotskaia V.S."/>
            <person name="Walker M."/>
            <person name="Wu D."/>
            <person name="Yu G."/>
            <person name="Fraser C.M."/>
            <person name="Venter J.C."/>
            <person name="Davis R.W."/>
        </authorList>
    </citation>
    <scope>NUCLEOTIDE SEQUENCE [LARGE SCALE GENOMIC DNA]</scope>
    <source>
        <strain>cv. Columbia</strain>
    </source>
</reference>
<reference key="2">
    <citation type="journal article" date="2017" name="Plant J.">
        <title>Araport11: a complete reannotation of the Arabidopsis thaliana reference genome.</title>
        <authorList>
            <person name="Cheng C.Y."/>
            <person name="Krishnakumar V."/>
            <person name="Chan A.P."/>
            <person name="Thibaud-Nissen F."/>
            <person name="Schobel S."/>
            <person name="Town C.D."/>
        </authorList>
    </citation>
    <scope>GENOME REANNOTATION</scope>
    <source>
        <strain>cv. Columbia</strain>
    </source>
</reference>
<reference key="3">
    <citation type="journal article" date="2003" name="Science">
        <title>Empirical analysis of transcriptional activity in the Arabidopsis genome.</title>
        <authorList>
            <person name="Yamada K."/>
            <person name="Lim J."/>
            <person name="Dale J.M."/>
            <person name="Chen H."/>
            <person name="Shinn P."/>
            <person name="Palm C.J."/>
            <person name="Southwick A.M."/>
            <person name="Wu H.C."/>
            <person name="Kim C.J."/>
            <person name="Nguyen M."/>
            <person name="Pham P.K."/>
            <person name="Cheuk R.F."/>
            <person name="Karlin-Newmann G."/>
            <person name="Liu S.X."/>
            <person name="Lam B."/>
            <person name="Sakano H."/>
            <person name="Wu T."/>
            <person name="Yu G."/>
            <person name="Miranda M."/>
            <person name="Quach H.L."/>
            <person name="Tripp M."/>
            <person name="Chang C.H."/>
            <person name="Lee J.M."/>
            <person name="Toriumi M.J."/>
            <person name="Chan M.M."/>
            <person name="Tang C.C."/>
            <person name="Onodera C.S."/>
            <person name="Deng J.M."/>
            <person name="Akiyama K."/>
            <person name="Ansari Y."/>
            <person name="Arakawa T."/>
            <person name="Banh J."/>
            <person name="Banno F."/>
            <person name="Bowser L."/>
            <person name="Brooks S.Y."/>
            <person name="Carninci P."/>
            <person name="Chao Q."/>
            <person name="Choy N."/>
            <person name="Enju A."/>
            <person name="Goldsmith A.D."/>
            <person name="Gurjal M."/>
            <person name="Hansen N.F."/>
            <person name="Hayashizaki Y."/>
            <person name="Johnson-Hopson C."/>
            <person name="Hsuan V.W."/>
            <person name="Iida K."/>
            <person name="Karnes M."/>
            <person name="Khan S."/>
            <person name="Koesema E."/>
            <person name="Ishida J."/>
            <person name="Jiang P.X."/>
            <person name="Jones T."/>
            <person name="Kawai J."/>
            <person name="Kamiya A."/>
            <person name="Meyers C."/>
            <person name="Nakajima M."/>
            <person name="Narusaka M."/>
            <person name="Seki M."/>
            <person name="Sakurai T."/>
            <person name="Satou M."/>
            <person name="Tamse R."/>
            <person name="Vaysberg M."/>
            <person name="Wallender E.K."/>
            <person name="Wong C."/>
            <person name="Yamamura Y."/>
            <person name="Yuan S."/>
            <person name="Shinozaki K."/>
            <person name="Davis R.W."/>
            <person name="Theologis A."/>
            <person name="Ecker J.R."/>
        </authorList>
    </citation>
    <scope>NUCLEOTIDE SEQUENCE [LARGE SCALE MRNA] (ISOFORMS 1 AND 2)</scope>
    <source>
        <strain>cv. Columbia</strain>
    </source>
</reference>
<reference key="4">
    <citation type="journal article" date="2007" name="Pharmacol. Ther.">
        <title>Protein arginine methyltransferases: evolution and assessment of their pharmacological and therapeutic potential.</title>
        <authorList>
            <person name="Krause C.D."/>
            <person name="Yang Z.-H."/>
            <person name="Kim Y.-S."/>
            <person name="Lee J.-H."/>
            <person name="Cook J.R."/>
            <person name="Pestka S."/>
        </authorList>
    </citation>
    <scope>GENE FAMILY</scope>
    <scope>NOMENCLATURE</scope>
</reference>
<reference key="5">
    <citation type="journal article" date="2011" name="J. Mol. Biol.">
        <title>Crystal structure of the plant epigenetic protein arginine methyltransferase 10.</title>
        <authorList>
            <person name="Cheng Y."/>
            <person name="Frazier M."/>
            <person name="Lu F."/>
            <person name="Cao X."/>
            <person name="Redinbo M.R."/>
        </authorList>
    </citation>
    <scope>X-RAY CRYSTALLOGRAPHY (2.61 ANGSTROMS) OF 11-383 IN COMPLEX WITH S-ADENOSYL-L-HOMOCYSTEINE</scope>
    <scope>FUNCTION</scope>
    <scope>SUBUNIT</scope>
    <scope>MUTAGENESIS OF 203-TRP--GLY-225</scope>
</reference>
<sequence length="383" mass="43130">MRSSQNGGAMGGRAAGTGGGGPSAPVDKEVDYAQYFCTYSFLYHQKDMLSDRVRMDAYFNAVFQNKHHFEGKTVLDVGTGSGILAIWSAQAGARKVYAVEATKMADHARALVKANNLDHIVEVIEGSVEDISLPEKVDVIISEWMGYFLLRESMFDSVISARDRWLKPTGVMYPSHARMWLAPIKSNIADRKRNDFDGAMADWHNFSDEIKSYYGVDMGVLTKPFAEEQEKYYIQTAMWNDLNPQQIIGTPTIVKEMDCLTASVSEIEEVRSNVTSVINMEHTRLCGFGGWFDVQFSGRKEDPAQQEIELTTAPSEQHCTHWGQQVFIMSNPINVEEGDNLNLGLLMSRSKENHRLMEIELNCEIKEASGNPKESFKKTYFIE</sequence>
<organism>
    <name type="scientific">Arabidopsis thaliana</name>
    <name type="common">Mouse-ear cress</name>
    <dbReference type="NCBI Taxonomy" id="3702"/>
    <lineage>
        <taxon>Eukaryota</taxon>
        <taxon>Viridiplantae</taxon>
        <taxon>Streptophyta</taxon>
        <taxon>Embryophyta</taxon>
        <taxon>Tracheophyta</taxon>
        <taxon>Spermatophyta</taxon>
        <taxon>Magnoliopsida</taxon>
        <taxon>eudicotyledons</taxon>
        <taxon>Gunneridae</taxon>
        <taxon>Pentapetalae</taxon>
        <taxon>rosids</taxon>
        <taxon>malvids</taxon>
        <taxon>Brassicales</taxon>
        <taxon>Brassicaceae</taxon>
        <taxon>Camelineae</taxon>
        <taxon>Arabidopsis</taxon>
    </lineage>
</organism>
<comment type="function">
    <text evidence="4">Methylates (mono and asymmetric dimethylation) the guanidino nitrogens of arginyl residues in some proteins. Essential for regulating flowering time.</text>
</comment>
<comment type="catalytic activity">
    <reaction>
        <text>L-arginyl-[protein] + 2 S-adenosyl-L-methionine = N(omega),N(omega)-dimethyl-L-arginyl-[protein] + 2 S-adenosyl-L-homocysteine + 2 H(+)</text>
        <dbReference type="Rhea" id="RHEA:48096"/>
        <dbReference type="Rhea" id="RHEA-COMP:10532"/>
        <dbReference type="Rhea" id="RHEA-COMP:11991"/>
        <dbReference type="ChEBI" id="CHEBI:15378"/>
        <dbReference type="ChEBI" id="CHEBI:29965"/>
        <dbReference type="ChEBI" id="CHEBI:57856"/>
        <dbReference type="ChEBI" id="CHEBI:59789"/>
        <dbReference type="ChEBI" id="CHEBI:61897"/>
        <dbReference type="EC" id="2.1.1.319"/>
    </reaction>
</comment>
<comment type="subunit">
    <text evidence="4">Ring-like homodimer.</text>
</comment>
<comment type="alternative products">
    <event type="alternative splicing"/>
    <isoform>
        <id>Q9MAT5-1</id>
        <name>1</name>
        <sequence type="displayed"/>
    </isoform>
    <isoform>
        <id>Q9MAT5-2</id>
        <name>2</name>
        <sequence type="described" ref="VSP_027462"/>
    </isoform>
</comment>
<comment type="miscellaneous">
    <molecule>Isoform 2</molecule>
    <text evidence="6">May be due to a competing acceptor splice site.</text>
</comment>
<comment type="similarity">
    <text evidence="2">Belongs to the class I-like SAM-binding methyltransferase superfamily. Protein arginine N-methyltransferase family.</text>
</comment>
<accession>Q9MAT5</accession>
<accession>Q8W552</accession>
<accession>Q93Z15</accession>
<keyword id="KW-0002">3D-structure</keyword>
<keyword id="KW-0025">Alternative splicing</keyword>
<keyword id="KW-0489">Methyltransferase</keyword>
<keyword id="KW-1185">Reference proteome</keyword>
<keyword id="KW-0949">S-adenosyl-L-methionine</keyword>
<keyword id="KW-0808">Transferase</keyword>
<proteinExistence type="evidence at protein level"/>
<protein>
    <recommendedName>
        <fullName>Protein arginine N-methyltransferase PRMT10</fullName>
        <ecNumber>2.1.1.319</ecNumber>
    </recommendedName>
</protein>
<name>ANM10_ARATH</name>
<feature type="chain" id="PRO_0000294008" description="Protein arginine N-methyltransferase PRMT10">
    <location>
        <begin position="1"/>
        <end position="383"/>
    </location>
</feature>
<feature type="domain" description="SAM-dependent MTase PRMT-type" evidence="2">
    <location>
        <begin position="29"/>
        <end position="360"/>
    </location>
</feature>
<feature type="region of interest" description="Disordered" evidence="3">
    <location>
        <begin position="1"/>
        <end position="23"/>
    </location>
</feature>
<feature type="region of interest" description="Dimerization arm">
    <location>
        <begin position="190"/>
        <end position="230"/>
    </location>
</feature>
<feature type="compositionally biased region" description="Gly residues" evidence="3">
    <location>
        <begin position="8"/>
        <end position="22"/>
    </location>
</feature>
<feature type="active site" evidence="1">
    <location>
        <position position="143"/>
    </location>
</feature>
<feature type="active site" evidence="1">
    <location>
        <position position="152"/>
    </location>
</feature>
<feature type="binding site">
    <location>
        <position position="45"/>
    </location>
    <ligand>
        <name>S-adenosyl-L-methionine</name>
        <dbReference type="ChEBI" id="CHEBI:59789"/>
    </ligand>
</feature>
<feature type="binding site">
    <location>
        <position position="54"/>
    </location>
    <ligand>
        <name>S-adenosyl-L-methionine</name>
        <dbReference type="ChEBI" id="CHEBI:59789"/>
    </ligand>
</feature>
<feature type="binding site">
    <location>
        <position position="78"/>
    </location>
    <ligand>
        <name>S-adenosyl-L-methionine</name>
        <dbReference type="ChEBI" id="CHEBI:59789"/>
    </ligand>
</feature>
<feature type="binding site">
    <location>
        <position position="100"/>
    </location>
    <ligand>
        <name>S-adenosyl-L-methionine</name>
        <dbReference type="ChEBI" id="CHEBI:59789"/>
    </ligand>
</feature>
<feature type="binding site">
    <location>
        <position position="129"/>
    </location>
    <ligand>
        <name>S-adenosyl-L-methionine</name>
        <dbReference type="ChEBI" id="CHEBI:59789"/>
    </ligand>
</feature>
<feature type="splice variant" id="VSP_027462" description="In isoform 2." evidence="5">
    <location>
        <begin position="1"/>
        <end position="103"/>
    </location>
</feature>
<feature type="mutagenesis site" description="No dimerization and no observable activity toward histones H2A and H4." evidence="4">
    <location>
        <begin position="203"/>
        <end position="225"/>
    </location>
</feature>
<feature type="sequence conflict" description="In Ref. 3; AAL32019." evidence="6" ref="3">
    <original>N</original>
    <variation>Y</variation>
    <location>
        <position position="362"/>
    </location>
</feature>
<feature type="helix" evidence="7">
    <location>
        <begin position="38"/>
        <end position="40"/>
    </location>
</feature>
<feature type="helix" evidence="7">
    <location>
        <begin position="42"/>
        <end position="49"/>
    </location>
</feature>
<feature type="helix" evidence="7">
    <location>
        <begin position="52"/>
        <end position="63"/>
    </location>
</feature>
<feature type="turn" evidence="7">
    <location>
        <begin position="64"/>
        <end position="71"/>
    </location>
</feature>
<feature type="strand" evidence="7">
    <location>
        <begin position="73"/>
        <end position="78"/>
    </location>
</feature>
<feature type="turn" evidence="7">
    <location>
        <begin position="80"/>
        <end position="82"/>
    </location>
</feature>
<feature type="helix" evidence="7">
    <location>
        <begin position="83"/>
        <end position="90"/>
    </location>
</feature>
<feature type="strand" evidence="7">
    <location>
        <begin position="94"/>
        <end position="102"/>
    </location>
</feature>
<feature type="helix" evidence="7">
    <location>
        <begin position="105"/>
        <end position="114"/>
    </location>
</feature>
<feature type="turn" evidence="7">
    <location>
        <begin position="118"/>
        <end position="120"/>
    </location>
</feature>
<feature type="strand" evidence="7">
    <location>
        <begin position="121"/>
        <end position="126"/>
    </location>
</feature>
<feature type="helix" evidence="7">
    <location>
        <begin position="128"/>
        <end position="130"/>
    </location>
</feature>
<feature type="strand" evidence="7">
    <location>
        <begin position="137"/>
        <end position="142"/>
    </location>
</feature>
<feature type="turn" evidence="7">
    <location>
        <begin position="150"/>
        <end position="152"/>
    </location>
</feature>
<feature type="helix" evidence="7">
    <location>
        <begin position="155"/>
        <end position="165"/>
    </location>
</feature>
<feature type="strand" evidence="7">
    <location>
        <begin position="166"/>
        <end position="184"/>
    </location>
</feature>
<feature type="helix" evidence="7">
    <location>
        <begin position="188"/>
        <end position="212"/>
    </location>
</feature>
<feature type="helix" evidence="7">
    <location>
        <begin position="219"/>
        <end position="221"/>
    </location>
</feature>
<feature type="helix" evidence="7">
    <location>
        <begin position="222"/>
        <end position="233"/>
    </location>
</feature>
<feature type="strand" evidence="7">
    <location>
        <begin position="238"/>
        <end position="240"/>
    </location>
</feature>
<feature type="helix" evidence="7">
    <location>
        <begin position="244"/>
        <end position="246"/>
    </location>
</feature>
<feature type="strand" evidence="7">
    <location>
        <begin position="252"/>
        <end position="258"/>
    </location>
</feature>
<feature type="turn" evidence="7">
    <location>
        <begin position="259"/>
        <end position="261"/>
    </location>
</feature>
<feature type="helix" evidence="7">
    <location>
        <begin position="264"/>
        <end position="266"/>
    </location>
</feature>
<feature type="strand" evidence="7">
    <location>
        <begin position="268"/>
        <end position="277"/>
    </location>
</feature>
<feature type="strand" evidence="7">
    <location>
        <begin position="283"/>
        <end position="299"/>
    </location>
</feature>
<feature type="strand" evidence="7">
    <location>
        <begin position="302"/>
        <end position="311"/>
    </location>
</feature>
<feature type="strand" evidence="7">
    <location>
        <begin position="324"/>
        <end position="335"/>
    </location>
</feature>
<feature type="strand" evidence="7">
    <location>
        <begin position="340"/>
        <end position="349"/>
    </location>
</feature>
<feature type="strand" evidence="7">
    <location>
        <begin position="356"/>
        <end position="366"/>
    </location>
</feature>
<feature type="strand" evidence="7">
    <location>
        <begin position="368"/>
        <end position="370"/>
    </location>
</feature>
<feature type="strand" evidence="7">
    <location>
        <begin position="376"/>
        <end position="382"/>
    </location>
</feature>
<gene>
    <name type="primary">PRMT10</name>
    <name type="synonym">PRMT4.2</name>
    <name type="ordered locus">At1g04870</name>
    <name type="ORF">F13M7.14</name>
    <name type="ORF">F13M7_12</name>
</gene>